<name>RIMM_BORA1</name>
<proteinExistence type="inferred from homology"/>
<organism>
    <name type="scientific">Bordetella avium (strain 197N)</name>
    <dbReference type="NCBI Taxonomy" id="360910"/>
    <lineage>
        <taxon>Bacteria</taxon>
        <taxon>Pseudomonadati</taxon>
        <taxon>Pseudomonadota</taxon>
        <taxon>Betaproteobacteria</taxon>
        <taxon>Burkholderiales</taxon>
        <taxon>Alcaligenaceae</taxon>
        <taxon>Bordetella</taxon>
    </lineage>
</organism>
<protein>
    <recommendedName>
        <fullName evidence="1">Ribosome maturation factor RimM</fullName>
    </recommendedName>
</protein>
<sequence length="190" mass="20728">MSERTLPDDLVELGRVASAYGVKGWIKVQPHSAQADVLRAAKQWWLAATPKSAPRVYAVQQCRVHGATAVAQLEGIADRDQAEALRGATVWVSRALFPAAAEDEYYWIDLVGCAFYSSVSGSDVRVGVVEEVFDNPAHAILRVVCQDAEGKALLDAKGRAREMLVPFVSAHIQAVDIAARRIDSDWPLED</sequence>
<feature type="chain" id="PRO_0000244113" description="Ribosome maturation factor RimM">
    <location>
        <begin position="1"/>
        <end position="190"/>
    </location>
</feature>
<feature type="domain" description="PRC barrel" evidence="1">
    <location>
        <begin position="102"/>
        <end position="190"/>
    </location>
</feature>
<evidence type="ECO:0000255" key="1">
    <source>
        <dbReference type="HAMAP-Rule" id="MF_00014"/>
    </source>
</evidence>
<gene>
    <name evidence="1" type="primary">rimM</name>
    <name type="ordered locus">BAV2350</name>
</gene>
<reference key="1">
    <citation type="journal article" date="2006" name="J. Bacteriol.">
        <title>Comparison of the genome sequence of the poultry pathogen Bordetella avium with those of B. bronchiseptica, B. pertussis, and B. parapertussis reveals extensive diversity in surface structures associated with host interaction.</title>
        <authorList>
            <person name="Sebaihia M."/>
            <person name="Preston A."/>
            <person name="Maskell D.J."/>
            <person name="Kuzmiak H."/>
            <person name="Connell T.D."/>
            <person name="King N.D."/>
            <person name="Orndorff P.E."/>
            <person name="Miyamoto D.M."/>
            <person name="Thomson N.R."/>
            <person name="Harris D."/>
            <person name="Goble A."/>
            <person name="Lord A."/>
            <person name="Murphy L."/>
            <person name="Quail M.A."/>
            <person name="Rutter S."/>
            <person name="Squares R."/>
            <person name="Squares S."/>
            <person name="Woodward J."/>
            <person name="Parkhill J."/>
            <person name="Temple L.M."/>
        </authorList>
    </citation>
    <scope>NUCLEOTIDE SEQUENCE [LARGE SCALE GENOMIC DNA]</scope>
    <source>
        <strain>197N</strain>
    </source>
</reference>
<comment type="function">
    <text evidence="1">An accessory protein needed during the final step in the assembly of 30S ribosomal subunit, possibly for assembly of the head region. Essential for efficient processing of 16S rRNA. May be needed both before and after RbfA during the maturation of 16S rRNA. It has affinity for free ribosomal 30S subunits but not for 70S ribosomes.</text>
</comment>
<comment type="subunit">
    <text evidence="1">Binds ribosomal protein uS19.</text>
</comment>
<comment type="subcellular location">
    <subcellularLocation>
        <location evidence="1">Cytoplasm</location>
    </subcellularLocation>
</comment>
<comment type="domain">
    <text evidence="1">The PRC barrel domain binds ribosomal protein uS19.</text>
</comment>
<comment type="similarity">
    <text evidence="1">Belongs to the RimM family.</text>
</comment>
<accession>Q2KY81</accession>
<dbReference type="EMBL" id="AM167904">
    <property type="protein sequence ID" value="CAJ49960.1"/>
    <property type="molecule type" value="Genomic_DNA"/>
</dbReference>
<dbReference type="RefSeq" id="WP_012418011.1">
    <property type="nucleotide sequence ID" value="NC_010645.1"/>
</dbReference>
<dbReference type="SMR" id="Q2KY81"/>
<dbReference type="STRING" id="360910.BAV2350"/>
<dbReference type="GeneID" id="92934473"/>
<dbReference type="KEGG" id="bav:BAV2350"/>
<dbReference type="eggNOG" id="COG0806">
    <property type="taxonomic scope" value="Bacteria"/>
</dbReference>
<dbReference type="HOGENOM" id="CLU_077636_1_0_4"/>
<dbReference type="OrthoDB" id="9783509at2"/>
<dbReference type="Proteomes" id="UP000001977">
    <property type="component" value="Chromosome"/>
</dbReference>
<dbReference type="GO" id="GO:0005737">
    <property type="term" value="C:cytoplasm"/>
    <property type="evidence" value="ECO:0007669"/>
    <property type="project" value="UniProtKB-SubCell"/>
</dbReference>
<dbReference type="GO" id="GO:0005840">
    <property type="term" value="C:ribosome"/>
    <property type="evidence" value="ECO:0007669"/>
    <property type="project" value="InterPro"/>
</dbReference>
<dbReference type="GO" id="GO:0043022">
    <property type="term" value="F:ribosome binding"/>
    <property type="evidence" value="ECO:0007669"/>
    <property type="project" value="InterPro"/>
</dbReference>
<dbReference type="GO" id="GO:0042274">
    <property type="term" value="P:ribosomal small subunit biogenesis"/>
    <property type="evidence" value="ECO:0007669"/>
    <property type="project" value="UniProtKB-UniRule"/>
</dbReference>
<dbReference type="GO" id="GO:0006364">
    <property type="term" value="P:rRNA processing"/>
    <property type="evidence" value="ECO:0007669"/>
    <property type="project" value="UniProtKB-UniRule"/>
</dbReference>
<dbReference type="Gene3D" id="2.30.30.240">
    <property type="entry name" value="PRC-barrel domain"/>
    <property type="match status" value="1"/>
</dbReference>
<dbReference type="Gene3D" id="2.40.30.60">
    <property type="entry name" value="RimM"/>
    <property type="match status" value="1"/>
</dbReference>
<dbReference type="HAMAP" id="MF_00014">
    <property type="entry name" value="Ribosome_mat_RimM"/>
    <property type="match status" value="1"/>
</dbReference>
<dbReference type="InterPro" id="IPR011033">
    <property type="entry name" value="PRC_barrel-like_sf"/>
</dbReference>
<dbReference type="InterPro" id="IPR056792">
    <property type="entry name" value="PRC_RimM"/>
</dbReference>
<dbReference type="InterPro" id="IPR011961">
    <property type="entry name" value="RimM"/>
</dbReference>
<dbReference type="InterPro" id="IPR002676">
    <property type="entry name" value="RimM_N"/>
</dbReference>
<dbReference type="InterPro" id="IPR036976">
    <property type="entry name" value="RimM_N_sf"/>
</dbReference>
<dbReference type="InterPro" id="IPR009000">
    <property type="entry name" value="Transl_B-barrel_sf"/>
</dbReference>
<dbReference type="NCBIfam" id="TIGR02273">
    <property type="entry name" value="16S_RimM"/>
    <property type="match status" value="1"/>
</dbReference>
<dbReference type="PANTHER" id="PTHR33692">
    <property type="entry name" value="RIBOSOME MATURATION FACTOR RIMM"/>
    <property type="match status" value="1"/>
</dbReference>
<dbReference type="PANTHER" id="PTHR33692:SF1">
    <property type="entry name" value="RIBOSOME MATURATION FACTOR RIMM"/>
    <property type="match status" value="1"/>
</dbReference>
<dbReference type="Pfam" id="PF24986">
    <property type="entry name" value="PRC_RimM"/>
    <property type="match status" value="1"/>
</dbReference>
<dbReference type="Pfam" id="PF01782">
    <property type="entry name" value="RimM"/>
    <property type="match status" value="1"/>
</dbReference>
<dbReference type="SUPFAM" id="SSF50346">
    <property type="entry name" value="PRC-barrel domain"/>
    <property type="match status" value="1"/>
</dbReference>
<dbReference type="SUPFAM" id="SSF50447">
    <property type="entry name" value="Translation proteins"/>
    <property type="match status" value="1"/>
</dbReference>
<keyword id="KW-0143">Chaperone</keyword>
<keyword id="KW-0963">Cytoplasm</keyword>
<keyword id="KW-1185">Reference proteome</keyword>
<keyword id="KW-0690">Ribosome biogenesis</keyword>
<keyword id="KW-0698">rRNA processing</keyword>